<feature type="chain" id="PRO_1000141871" description="Large ribosomal subunit protein uL3">
    <location>
        <begin position="1"/>
        <end position="236"/>
    </location>
</feature>
<feature type="region of interest" description="Disordered" evidence="2">
    <location>
        <begin position="215"/>
        <end position="236"/>
    </location>
</feature>
<feature type="compositionally biased region" description="Low complexity" evidence="2">
    <location>
        <begin position="221"/>
        <end position="236"/>
    </location>
</feature>
<name>RL3_PARS2</name>
<keyword id="KW-0687">Ribonucleoprotein</keyword>
<keyword id="KW-0689">Ribosomal protein</keyword>
<keyword id="KW-0694">RNA-binding</keyword>
<keyword id="KW-0699">rRNA-binding</keyword>
<accession>A8LC56</accession>
<protein>
    <recommendedName>
        <fullName evidence="1">Large ribosomal subunit protein uL3</fullName>
    </recommendedName>
    <alternativeName>
        <fullName evidence="3">50S ribosomal protein L3</fullName>
    </alternativeName>
</protein>
<proteinExistence type="inferred from homology"/>
<sequence length="236" mass="24652">MLNRNYRGLLGTKLGMTQVWDANNRVVPVTVIQAGPNVVTQVKTPDSDGYSAVQLGYGEIDPRRINKPMRGHFETSGATPRRHLVELRTADAGNYRPGQQLTGEVFDAGQVVDVTGTSKGKGFAGVMKRHGFKGLGAGHGVERKHRSPGSVGGCATPGRVFKGLRMAGRMGHDRVTVAGLTIHAVDTERGFLLIKGAIPGPDGGLVFVRSAAKRPAPEPAAPVAAAAAGTGEEASA</sequence>
<gene>
    <name evidence="1" type="primary">rplC</name>
    <name type="ordered locus">Franean1_6049</name>
</gene>
<comment type="function">
    <text evidence="1">One of the primary rRNA binding proteins, it binds directly near the 3'-end of the 23S rRNA, where it nucleates assembly of the 50S subunit.</text>
</comment>
<comment type="subunit">
    <text evidence="1">Part of the 50S ribosomal subunit. Forms a cluster with proteins L14 and L19.</text>
</comment>
<comment type="similarity">
    <text evidence="1">Belongs to the universal ribosomal protein uL3 family.</text>
</comment>
<reference key="1">
    <citation type="journal article" date="2007" name="Genome Res.">
        <title>Genome characteristics of facultatively symbiotic Frankia sp. strains reflect host range and host plant biogeography.</title>
        <authorList>
            <person name="Normand P."/>
            <person name="Lapierre P."/>
            <person name="Tisa L.S."/>
            <person name="Gogarten J.P."/>
            <person name="Alloisio N."/>
            <person name="Bagnarol E."/>
            <person name="Bassi C.A."/>
            <person name="Berry A.M."/>
            <person name="Bickhart D.M."/>
            <person name="Choisne N."/>
            <person name="Couloux A."/>
            <person name="Cournoyer B."/>
            <person name="Cruveiller S."/>
            <person name="Daubin V."/>
            <person name="Demange N."/>
            <person name="Francino M.P."/>
            <person name="Goltsman E."/>
            <person name="Huang Y."/>
            <person name="Kopp O.R."/>
            <person name="Labarre L."/>
            <person name="Lapidus A."/>
            <person name="Lavire C."/>
            <person name="Marechal J."/>
            <person name="Martinez M."/>
            <person name="Mastronunzio J.E."/>
            <person name="Mullin B.C."/>
            <person name="Niemann J."/>
            <person name="Pujic P."/>
            <person name="Rawnsley T."/>
            <person name="Rouy Z."/>
            <person name="Schenowitz C."/>
            <person name="Sellstedt A."/>
            <person name="Tavares F."/>
            <person name="Tomkins J.P."/>
            <person name="Vallenet D."/>
            <person name="Valverde C."/>
            <person name="Wall L.G."/>
            <person name="Wang Y."/>
            <person name="Medigue C."/>
            <person name="Benson D.R."/>
        </authorList>
    </citation>
    <scope>NUCLEOTIDE SEQUENCE [LARGE SCALE GENOMIC DNA]</scope>
    <source>
        <strain>EAN1pec</strain>
    </source>
</reference>
<evidence type="ECO:0000255" key="1">
    <source>
        <dbReference type="HAMAP-Rule" id="MF_01325"/>
    </source>
</evidence>
<evidence type="ECO:0000256" key="2">
    <source>
        <dbReference type="SAM" id="MobiDB-lite"/>
    </source>
</evidence>
<evidence type="ECO:0000305" key="3"/>
<organism>
    <name type="scientific">Parafrankia sp. (strain EAN1pec)</name>
    <dbReference type="NCBI Taxonomy" id="298653"/>
    <lineage>
        <taxon>Bacteria</taxon>
        <taxon>Bacillati</taxon>
        <taxon>Actinomycetota</taxon>
        <taxon>Actinomycetes</taxon>
        <taxon>Frankiales</taxon>
        <taxon>Frankiaceae</taxon>
        <taxon>Parafrankia</taxon>
    </lineage>
</organism>
<dbReference type="EMBL" id="CP000820">
    <property type="protein sequence ID" value="ABW15393.1"/>
    <property type="molecule type" value="Genomic_DNA"/>
</dbReference>
<dbReference type="RefSeq" id="WP_020463478.1">
    <property type="nucleotide sequence ID" value="NC_009921.1"/>
</dbReference>
<dbReference type="SMR" id="A8LC56"/>
<dbReference type="STRING" id="298653.Franean1_6049"/>
<dbReference type="KEGG" id="fre:Franean1_6049"/>
<dbReference type="eggNOG" id="COG0087">
    <property type="taxonomic scope" value="Bacteria"/>
</dbReference>
<dbReference type="HOGENOM" id="CLU_044142_4_1_11"/>
<dbReference type="GO" id="GO:0022625">
    <property type="term" value="C:cytosolic large ribosomal subunit"/>
    <property type="evidence" value="ECO:0007669"/>
    <property type="project" value="TreeGrafter"/>
</dbReference>
<dbReference type="GO" id="GO:0019843">
    <property type="term" value="F:rRNA binding"/>
    <property type="evidence" value="ECO:0007669"/>
    <property type="project" value="UniProtKB-UniRule"/>
</dbReference>
<dbReference type="GO" id="GO:0003735">
    <property type="term" value="F:structural constituent of ribosome"/>
    <property type="evidence" value="ECO:0007669"/>
    <property type="project" value="InterPro"/>
</dbReference>
<dbReference type="GO" id="GO:0006412">
    <property type="term" value="P:translation"/>
    <property type="evidence" value="ECO:0007669"/>
    <property type="project" value="UniProtKB-UniRule"/>
</dbReference>
<dbReference type="FunFam" id="2.40.30.10:FF:000004">
    <property type="entry name" value="50S ribosomal protein L3"/>
    <property type="match status" value="1"/>
</dbReference>
<dbReference type="FunFam" id="3.30.160.810:FF:000001">
    <property type="entry name" value="50S ribosomal protein L3"/>
    <property type="match status" value="1"/>
</dbReference>
<dbReference type="Gene3D" id="3.30.160.810">
    <property type="match status" value="1"/>
</dbReference>
<dbReference type="Gene3D" id="2.40.30.10">
    <property type="entry name" value="Translation factors"/>
    <property type="match status" value="1"/>
</dbReference>
<dbReference type="HAMAP" id="MF_01325_B">
    <property type="entry name" value="Ribosomal_uL3_B"/>
    <property type="match status" value="1"/>
</dbReference>
<dbReference type="InterPro" id="IPR000597">
    <property type="entry name" value="Ribosomal_uL3"/>
</dbReference>
<dbReference type="InterPro" id="IPR019927">
    <property type="entry name" value="Ribosomal_uL3_bac/org-type"/>
</dbReference>
<dbReference type="InterPro" id="IPR019926">
    <property type="entry name" value="Ribosomal_uL3_CS"/>
</dbReference>
<dbReference type="InterPro" id="IPR009000">
    <property type="entry name" value="Transl_B-barrel_sf"/>
</dbReference>
<dbReference type="NCBIfam" id="TIGR03625">
    <property type="entry name" value="L3_bact"/>
    <property type="match status" value="1"/>
</dbReference>
<dbReference type="PANTHER" id="PTHR11229">
    <property type="entry name" value="50S RIBOSOMAL PROTEIN L3"/>
    <property type="match status" value="1"/>
</dbReference>
<dbReference type="PANTHER" id="PTHR11229:SF16">
    <property type="entry name" value="LARGE RIBOSOMAL SUBUNIT PROTEIN UL3C"/>
    <property type="match status" value="1"/>
</dbReference>
<dbReference type="Pfam" id="PF00297">
    <property type="entry name" value="Ribosomal_L3"/>
    <property type="match status" value="1"/>
</dbReference>
<dbReference type="SUPFAM" id="SSF50447">
    <property type="entry name" value="Translation proteins"/>
    <property type="match status" value="1"/>
</dbReference>
<dbReference type="PROSITE" id="PS00474">
    <property type="entry name" value="RIBOSOMAL_L3"/>
    <property type="match status" value="1"/>
</dbReference>